<feature type="chain" id="PRO_1000093761" description="Translation initiation factor IF-2">
    <location>
        <begin position="1"/>
        <end position="972"/>
    </location>
</feature>
<feature type="domain" description="tr-type G">
    <location>
        <begin position="472"/>
        <end position="641"/>
    </location>
</feature>
<feature type="region of interest" description="Disordered" evidence="3">
    <location>
        <begin position="49"/>
        <end position="86"/>
    </location>
</feature>
<feature type="region of interest" description="Disordered" evidence="3">
    <location>
        <begin position="100"/>
        <end position="383"/>
    </location>
</feature>
<feature type="region of interest" description="G1" evidence="1">
    <location>
        <begin position="481"/>
        <end position="488"/>
    </location>
</feature>
<feature type="region of interest" description="G2" evidence="1">
    <location>
        <begin position="506"/>
        <end position="510"/>
    </location>
</feature>
<feature type="region of interest" description="G3" evidence="1">
    <location>
        <begin position="527"/>
        <end position="530"/>
    </location>
</feature>
<feature type="region of interest" description="G4" evidence="1">
    <location>
        <begin position="581"/>
        <end position="584"/>
    </location>
</feature>
<feature type="region of interest" description="G5" evidence="1">
    <location>
        <begin position="617"/>
        <end position="619"/>
    </location>
</feature>
<feature type="compositionally biased region" description="Basic and acidic residues" evidence="3">
    <location>
        <begin position="49"/>
        <end position="63"/>
    </location>
</feature>
<feature type="compositionally biased region" description="Low complexity" evidence="3">
    <location>
        <begin position="105"/>
        <end position="114"/>
    </location>
</feature>
<feature type="compositionally biased region" description="Basic and acidic residues" evidence="3">
    <location>
        <begin position="121"/>
        <end position="177"/>
    </location>
</feature>
<feature type="compositionally biased region" description="Low complexity" evidence="3">
    <location>
        <begin position="178"/>
        <end position="209"/>
    </location>
</feature>
<feature type="compositionally biased region" description="Basic and acidic residues" evidence="3">
    <location>
        <begin position="210"/>
        <end position="261"/>
    </location>
</feature>
<feature type="compositionally biased region" description="Pro residues" evidence="3">
    <location>
        <begin position="277"/>
        <end position="286"/>
    </location>
</feature>
<feature type="compositionally biased region" description="Low complexity" evidence="3">
    <location>
        <begin position="298"/>
        <end position="327"/>
    </location>
</feature>
<feature type="compositionally biased region" description="Gly residues" evidence="3">
    <location>
        <begin position="356"/>
        <end position="369"/>
    </location>
</feature>
<feature type="binding site" evidence="2">
    <location>
        <begin position="481"/>
        <end position="488"/>
    </location>
    <ligand>
        <name>GTP</name>
        <dbReference type="ChEBI" id="CHEBI:37565"/>
    </ligand>
</feature>
<feature type="binding site" evidence="2">
    <location>
        <begin position="527"/>
        <end position="531"/>
    </location>
    <ligand>
        <name>GTP</name>
        <dbReference type="ChEBI" id="CHEBI:37565"/>
    </ligand>
</feature>
<feature type="binding site" evidence="2">
    <location>
        <begin position="581"/>
        <end position="584"/>
    </location>
    <ligand>
        <name>GTP</name>
        <dbReference type="ChEBI" id="CHEBI:37565"/>
    </ligand>
</feature>
<proteinExistence type="inferred from homology"/>
<reference key="1">
    <citation type="submission" date="2008-04" db="EMBL/GenBank/DDBJ databases">
        <title>Complete sequence of chromosome 1 of Burkholderia ambifaria MC40-6.</title>
        <authorList>
            <person name="Copeland A."/>
            <person name="Lucas S."/>
            <person name="Lapidus A."/>
            <person name="Glavina del Rio T."/>
            <person name="Dalin E."/>
            <person name="Tice H."/>
            <person name="Pitluck S."/>
            <person name="Chain P."/>
            <person name="Malfatti S."/>
            <person name="Shin M."/>
            <person name="Vergez L."/>
            <person name="Lang D."/>
            <person name="Schmutz J."/>
            <person name="Larimer F."/>
            <person name="Land M."/>
            <person name="Hauser L."/>
            <person name="Kyrpides N."/>
            <person name="Lykidis A."/>
            <person name="Ramette A."/>
            <person name="Konstantinidis K."/>
            <person name="Tiedje J."/>
            <person name="Richardson P."/>
        </authorList>
    </citation>
    <scope>NUCLEOTIDE SEQUENCE [LARGE SCALE GENOMIC DNA]</scope>
    <source>
        <strain>MC40-6</strain>
    </source>
</reference>
<evidence type="ECO:0000250" key="1"/>
<evidence type="ECO:0000255" key="2">
    <source>
        <dbReference type="HAMAP-Rule" id="MF_00100"/>
    </source>
</evidence>
<evidence type="ECO:0000256" key="3">
    <source>
        <dbReference type="SAM" id="MobiDB-lite"/>
    </source>
</evidence>
<sequence length="972" mass="104345">MASNNVAQFAAELKMPAGVLLEQLQAAGVQKASEDDALSEADKARLLDHLRKSHGATDGDKRKITLTRKHTSEIKQSDATGKARTIQVEVRKKRTFVKRDDVAEGAEQGQAQVAEADDDAELKRREEEARREAELLEKQAQELRERQERLEREEAERRAREEAAEAERRRAEEEAAAKRAAAAAVEAQQAAAQQAAEAQQETAGAQSAQDEARAAAERAAQREAAKKAEDAAREAADKTRAEQEEIRKRREAAEAEARAIREMMNTPRKAVVKAVEPPKPVEPPKPVEAKGTLHKPAKPAGAGAARPAVKKPAGAAPATTQAPAGAGDRNKKPGGGKGGWQDDAAKRRGIKTRGDSSGGVDRGWRGGPKGRGRHQDSASTFQAPTEPIVREVHVPETVSVADLAHKMSIKASEVIKVMMKMGQMVTINQVLDQETAMIVVEELGHRAVAAKLDDPEALLVEGEATTDAEQLPRPPVVTVMGHVDHGKTSLLDHIRRAKVAAGEAGGITQHIGAYHVETPRGVITFLDTPGHEAFTAMRARGAKATDIVVLVVAADDGVMPQTKEAIAHAKAGGVPIVVAINKIDKPEANPDRVKQELVAEGVVPEEYGGDSPFVPVSAKTGVGIDDLLENVLLQAEVLELKAPIEAPAKGIVIEAKLDKGKGPVATILVQSGTLNRGDVVLAGSAYGRVRAMLDENGKPTKEAGPSIPVEIQGLSEVPGAGEEVIVLPDERKAREIALFRQGKFRDVKLAKQQAAKLESMLEQMGEGEVQNLPLIIKADVQGSQEALVQSLLKLSTDEVRVQIVHSAVGGISENDVNLATASKAVIIGFNTRADAQARKLAESNGIDIRYYNIIYDAVDEVKAAMSGMLAPEKREVITGMVEVRQVFKVPKIGTVAGCMVTDGIVKRSSSVRVLRNNVVIFTGELESLKRFKDDVKEVKQGFECGMSVKNFNDVIEGDQFEVFEVTEVARTL</sequence>
<dbReference type="EMBL" id="CP001025">
    <property type="protein sequence ID" value="ACB63910.1"/>
    <property type="molecule type" value="Genomic_DNA"/>
</dbReference>
<dbReference type="RefSeq" id="WP_012363741.1">
    <property type="nucleotide sequence ID" value="NC_010551.1"/>
</dbReference>
<dbReference type="SMR" id="B1YP36"/>
<dbReference type="KEGG" id="bac:BamMC406_1422"/>
<dbReference type="HOGENOM" id="CLU_006301_6_0_4"/>
<dbReference type="OrthoDB" id="9811804at2"/>
<dbReference type="Proteomes" id="UP000001680">
    <property type="component" value="Chromosome 1"/>
</dbReference>
<dbReference type="GO" id="GO:0005829">
    <property type="term" value="C:cytosol"/>
    <property type="evidence" value="ECO:0007669"/>
    <property type="project" value="TreeGrafter"/>
</dbReference>
<dbReference type="GO" id="GO:0005525">
    <property type="term" value="F:GTP binding"/>
    <property type="evidence" value="ECO:0007669"/>
    <property type="project" value="UniProtKB-KW"/>
</dbReference>
<dbReference type="GO" id="GO:0003924">
    <property type="term" value="F:GTPase activity"/>
    <property type="evidence" value="ECO:0007669"/>
    <property type="project" value="UniProtKB-UniRule"/>
</dbReference>
<dbReference type="GO" id="GO:0003743">
    <property type="term" value="F:translation initiation factor activity"/>
    <property type="evidence" value="ECO:0007669"/>
    <property type="project" value="UniProtKB-UniRule"/>
</dbReference>
<dbReference type="CDD" id="cd01887">
    <property type="entry name" value="IF2_eIF5B"/>
    <property type="match status" value="1"/>
</dbReference>
<dbReference type="CDD" id="cd03702">
    <property type="entry name" value="IF2_mtIF2_II"/>
    <property type="match status" value="1"/>
</dbReference>
<dbReference type="CDD" id="cd03692">
    <property type="entry name" value="mtIF2_IVc"/>
    <property type="match status" value="1"/>
</dbReference>
<dbReference type="FunFam" id="2.40.30.10:FF:000007">
    <property type="entry name" value="Translation initiation factor IF-2"/>
    <property type="match status" value="1"/>
</dbReference>
<dbReference type="FunFam" id="2.40.30.10:FF:000008">
    <property type="entry name" value="Translation initiation factor IF-2"/>
    <property type="match status" value="1"/>
</dbReference>
<dbReference type="FunFam" id="3.40.50.10050:FF:000001">
    <property type="entry name" value="Translation initiation factor IF-2"/>
    <property type="match status" value="1"/>
</dbReference>
<dbReference type="FunFam" id="3.40.50.300:FF:000019">
    <property type="entry name" value="Translation initiation factor IF-2"/>
    <property type="match status" value="1"/>
</dbReference>
<dbReference type="Gene3D" id="3.40.50.300">
    <property type="entry name" value="P-loop containing nucleotide triphosphate hydrolases"/>
    <property type="match status" value="1"/>
</dbReference>
<dbReference type="Gene3D" id="3.30.56.50">
    <property type="entry name" value="Putative DNA-binding domain, N-terminal subdomain of bacterial translation initiation factor IF2"/>
    <property type="match status" value="1"/>
</dbReference>
<dbReference type="Gene3D" id="2.40.30.10">
    <property type="entry name" value="Translation factors"/>
    <property type="match status" value="2"/>
</dbReference>
<dbReference type="Gene3D" id="3.40.50.10050">
    <property type="entry name" value="Translation initiation factor IF- 2, domain 3"/>
    <property type="match status" value="1"/>
</dbReference>
<dbReference type="HAMAP" id="MF_00100_B">
    <property type="entry name" value="IF_2_B"/>
    <property type="match status" value="1"/>
</dbReference>
<dbReference type="InterPro" id="IPR009061">
    <property type="entry name" value="DNA-bd_dom_put_sf"/>
</dbReference>
<dbReference type="InterPro" id="IPR053905">
    <property type="entry name" value="EF-G-like_DII"/>
</dbReference>
<dbReference type="InterPro" id="IPR013575">
    <property type="entry name" value="IF2_assoc_dom_bac"/>
</dbReference>
<dbReference type="InterPro" id="IPR044145">
    <property type="entry name" value="IF2_II"/>
</dbReference>
<dbReference type="InterPro" id="IPR006847">
    <property type="entry name" value="IF2_N"/>
</dbReference>
<dbReference type="InterPro" id="IPR027417">
    <property type="entry name" value="P-loop_NTPase"/>
</dbReference>
<dbReference type="InterPro" id="IPR005225">
    <property type="entry name" value="Small_GTP-bd"/>
</dbReference>
<dbReference type="InterPro" id="IPR000795">
    <property type="entry name" value="T_Tr_GTP-bd_dom"/>
</dbReference>
<dbReference type="InterPro" id="IPR000178">
    <property type="entry name" value="TF_IF2_bacterial-like"/>
</dbReference>
<dbReference type="InterPro" id="IPR015760">
    <property type="entry name" value="TIF_IF2"/>
</dbReference>
<dbReference type="InterPro" id="IPR023115">
    <property type="entry name" value="TIF_IF2_dom3"/>
</dbReference>
<dbReference type="InterPro" id="IPR036925">
    <property type="entry name" value="TIF_IF2_dom3_sf"/>
</dbReference>
<dbReference type="InterPro" id="IPR009000">
    <property type="entry name" value="Transl_B-barrel_sf"/>
</dbReference>
<dbReference type="NCBIfam" id="TIGR00487">
    <property type="entry name" value="IF-2"/>
    <property type="match status" value="1"/>
</dbReference>
<dbReference type="NCBIfam" id="TIGR00231">
    <property type="entry name" value="small_GTP"/>
    <property type="match status" value="1"/>
</dbReference>
<dbReference type="PANTHER" id="PTHR43381:SF5">
    <property type="entry name" value="TR-TYPE G DOMAIN-CONTAINING PROTEIN"/>
    <property type="match status" value="1"/>
</dbReference>
<dbReference type="PANTHER" id="PTHR43381">
    <property type="entry name" value="TRANSLATION INITIATION FACTOR IF-2-RELATED"/>
    <property type="match status" value="1"/>
</dbReference>
<dbReference type="Pfam" id="PF22042">
    <property type="entry name" value="EF-G_D2"/>
    <property type="match status" value="1"/>
</dbReference>
<dbReference type="Pfam" id="PF00009">
    <property type="entry name" value="GTP_EFTU"/>
    <property type="match status" value="1"/>
</dbReference>
<dbReference type="Pfam" id="PF11987">
    <property type="entry name" value="IF-2"/>
    <property type="match status" value="1"/>
</dbReference>
<dbReference type="Pfam" id="PF08364">
    <property type="entry name" value="IF2_assoc"/>
    <property type="match status" value="1"/>
</dbReference>
<dbReference type="Pfam" id="PF04760">
    <property type="entry name" value="IF2_N"/>
    <property type="match status" value="2"/>
</dbReference>
<dbReference type="SUPFAM" id="SSF52156">
    <property type="entry name" value="Initiation factor IF2/eIF5b, domain 3"/>
    <property type="match status" value="1"/>
</dbReference>
<dbReference type="SUPFAM" id="SSF52540">
    <property type="entry name" value="P-loop containing nucleoside triphosphate hydrolases"/>
    <property type="match status" value="1"/>
</dbReference>
<dbReference type="SUPFAM" id="SSF46955">
    <property type="entry name" value="Putative DNA-binding domain"/>
    <property type="match status" value="1"/>
</dbReference>
<dbReference type="SUPFAM" id="SSF50447">
    <property type="entry name" value="Translation proteins"/>
    <property type="match status" value="2"/>
</dbReference>
<dbReference type="PROSITE" id="PS51722">
    <property type="entry name" value="G_TR_2"/>
    <property type="match status" value="1"/>
</dbReference>
<dbReference type="PROSITE" id="PS01176">
    <property type="entry name" value="IF2"/>
    <property type="match status" value="1"/>
</dbReference>
<comment type="function">
    <text evidence="2">One of the essential components for the initiation of protein synthesis. Protects formylmethionyl-tRNA from spontaneous hydrolysis and promotes its binding to the 30S ribosomal subunits. Also involved in the hydrolysis of GTP during the formation of the 70S ribosomal complex.</text>
</comment>
<comment type="subcellular location">
    <subcellularLocation>
        <location evidence="2">Cytoplasm</location>
    </subcellularLocation>
</comment>
<comment type="similarity">
    <text evidence="2">Belongs to the TRAFAC class translation factor GTPase superfamily. Classic translation factor GTPase family. IF-2 subfamily.</text>
</comment>
<name>IF2_BURA4</name>
<organism>
    <name type="scientific">Burkholderia ambifaria (strain MC40-6)</name>
    <dbReference type="NCBI Taxonomy" id="398577"/>
    <lineage>
        <taxon>Bacteria</taxon>
        <taxon>Pseudomonadati</taxon>
        <taxon>Pseudomonadota</taxon>
        <taxon>Betaproteobacteria</taxon>
        <taxon>Burkholderiales</taxon>
        <taxon>Burkholderiaceae</taxon>
        <taxon>Burkholderia</taxon>
        <taxon>Burkholderia cepacia complex</taxon>
    </lineage>
</organism>
<accession>B1YP36</accession>
<gene>
    <name evidence="2" type="primary">infB</name>
    <name type="ordered locus">BamMC406_1422</name>
</gene>
<protein>
    <recommendedName>
        <fullName evidence="2">Translation initiation factor IF-2</fullName>
    </recommendedName>
</protein>
<keyword id="KW-0963">Cytoplasm</keyword>
<keyword id="KW-0342">GTP-binding</keyword>
<keyword id="KW-0396">Initiation factor</keyword>
<keyword id="KW-0547">Nucleotide-binding</keyword>
<keyword id="KW-0648">Protein biosynthesis</keyword>